<reference key="1">
    <citation type="journal article" date="1999" name="Nature">
        <title>Sequence and analysis of chromosome 4 of the plant Arabidopsis thaliana.</title>
        <authorList>
            <person name="Mayer K.F.X."/>
            <person name="Schueller C."/>
            <person name="Wambutt R."/>
            <person name="Murphy G."/>
            <person name="Volckaert G."/>
            <person name="Pohl T."/>
            <person name="Duesterhoeft A."/>
            <person name="Stiekema W."/>
            <person name="Entian K.-D."/>
            <person name="Terryn N."/>
            <person name="Harris B."/>
            <person name="Ansorge W."/>
            <person name="Brandt P."/>
            <person name="Grivell L.A."/>
            <person name="Rieger M."/>
            <person name="Weichselgartner M."/>
            <person name="de Simone V."/>
            <person name="Obermaier B."/>
            <person name="Mache R."/>
            <person name="Mueller M."/>
            <person name="Kreis M."/>
            <person name="Delseny M."/>
            <person name="Puigdomenech P."/>
            <person name="Watson M."/>
            <person name="Schmidtheini T."/>
            <person name="Reichert B."/>
            <person name="Portetelle D."/>
            <person name="Perez-Alonso M."/>
            <person name="Boutry M."/>
            <person name="Bancroft I."/>
            <person name="Vos P."/>
            <person name="Hoheisel J."/>
            <person name="Zimmermann W."/>
            <person name="Wedler H."/>
            <person name="Ridley P."/>
            <person name="Langham S.-A."/>
            <person name="McCullagh B."/>
            <person name="Bilham L."/>
            <person name="Robben J."/>
            <person name="van der Schueren J."/>
            <person name="Grymonprez B."/>
            <person name="Chuang Y.-J."/>
            <person name="Vandenbussche F."/>
            <person name="Braeken M."/>
            <person name="Weltjens I."/>
            <person name="Voet M."/>
            <person name="Bastiaens I."/>
            <person name="Aert R."/>
            <person name="Defoor E."/>
            <person name="Weitzenegger T."/>
            <person name="Bothe G."/>
            <person name="Ramsperger U."/>
            <person name="Hilbert H."/>
            <person name="Braun M."/>
            <person name="Holzer E."/>
            <person name="Brandt A."/>
            <person name="Peters S."/>
            <person name="van Staveren M."/>
            <person name="Dirkse W."/>
            <person name="Mooijman P."/>
            <person name="Klein Lankhorst R."/>
            <person name="Rose M."/>
            <person name="Hauf J."/>
            <person name="Koetter P."/>
            <person name="Berneiser S."/>
            <person name="Hempel S."/>
            <person name="Feldpausch M."/>
            <person name="Lamberth S."/>
            <person name="Van den Daele H."/>
            <person name="De Keyser A."/>
            <person name="Buysshaert C."/>
            <person name="Gielen J."/>
            <person name="Villarroel R."/>
            <person name="De Clercq R."/>
            <person name="van Montagu M."/>
            <person name="Rogers J."/>
            <person name="Cronin A."/>
            <person name="Quail M.A."/>
            <person name="Bray-Allen S."/>
            <person name="Clark L."/>
            <person name="Doggett J."/>
            <person name="Hall S."/>
            <person name="Kay M."/>
            <person name="Lennard N."/>
            <person name="McLay K."/>
            <person name="Mayes R."/>
            <person name="Pettett A."/>
            <person name="Rajandream M.A."/>
            <person name="Lyne M."/>
            <person name="Benes V."/>
            <person name="Rechmann S."/>
            <person name="Borkova D."/>
            <person name="Bloecker H."/>
            <person name="Scharfe M."/>
            <person name="Grimm M."/>
            <person name="Loehnert T.-H."/>
            <person name="Dose S."/>
            <person name="de Haan M."/>
            <person name="Maarse A.C."/>
            <person name="Schaefer M."/>
            <person name="Mueller-Auer S."/>
            <person name="Gabel C."/>
            <person name="Fuchs M."/>
            <person name="Fartmann B."/>
            <person name="Granderath K."/>
            <person name="Dauner D."/>
            <person name="Herzl A."/>
            <person name="Neumann S."/>
            <person name="Argiriou A."/>
            <person name="Vitale D."/>
            <person name="Liguori R."/>
            <person name="Piravandi E."/>
            <person name="Massenet O."/>
            <person name="Quigley F."/>
            <person name="Clabauld G."/>
            <person name="Muendlein A."/>
            <person name="Felber R."/>
            <person name="Schnabl S."/>
            <person name="Hiller R."/>
            <person name="Schmidt W."/>
            <person name="Lecharny A."/>
            <person name="Aubourg S."/>
            <person name="Chefdor F."/>
            <person name="Cooke R."/>
            <person name="Berger C."/>
            <person name="Monfort A."/>
            <person name="Casacuberta E."/>
            <person name="Gibbons T."/>
            <person name="Weber N."/>
            <person name="Vandenbol M."/>
            <person name="Bargues M."/>
            <person name="Terol J."/>
            <person name="Torres A."/>
            <person name="Perez-Perez A."/>
            <person name="Purnelle B."/>
            <person name="Bent E."/>
            <person name="Johnson S."/>
            <person name="Tacon D."/>
            <person name="Jesse T."/>
            <person name="Heijnen L."/>
            <person name="Schwarz S."/>
            <person name="Scholler P."/>
            <person name="Heber S."/>
            <person name="Francs P."/>
            <person name="Bielke C."/>
            <person name="Frishman D."/>
            <person name="Haase D."/>
            <person name="Lemcke K."/>
            <person name="Mewes H.-W."/>
            <person name="Stocker S."/>
            <person name="Zaccaria P."/>
            <person name="Bevan M."/>
            <person name="Wilson R.K."/>
            <person name="de la Bastide M."/>
            <person name="Habermann K."/>
            <person name="Parnell L."/>
            <person name="Dedhia N."/>
            <person name="Gnoj L."/>
            <person name="Schutz K."/>
            <person name="Huang E."/>
            <person name="Spiegel L."/>
            <person name="Sekhon M."/>
            <person name="Murray J."/>
            <person name="Sheet P."/>
            <person name="Cordes M."/>
            <person name="Abu-Threideh J."/>
            <person name="Stoneking T."/>
            <person name="Kalicki J."/>
            <person name="Graves T."/>
            <person name="Harmon G."/>
            <person name="Edwards J."/>
            <person name="Latreille P."/>
            <person name="Courtney L."/>
            <person name="Cloud J."/>
            <person name="Abbott A."/>
            <person name="Scott K."/>
            <person name="Johnson D."/>
            <person name="Minx P."/>
            <person name="Bentley D."/>
            <person name="Fulton B."/>
            <person name="Miller N."/>
            <person name="Greco T."/>
            <person name="Kemp K."/>
            <person name="Kramer J."/>
            <person name="Fulton L."/>
            <person name="Mardis E."/>
            <person name="Dante M."/>
            <person name="Pepin K."/>
            <person name="Hillier L.W."/>
            <person name="Nelson J."/>
            <person name="Spieth J."/>
            <person name="Ryan E."/>
            <person name="Andrews S."/>
            <person name="Geisel C."/>
            <person name="Layman D."/>
            <person name="Du H."/>
            <person name="Ali J."/>
            <person name="Berghoff A."/>
            <person name="Jones K."/>
            <person name="Drone K."/>
            <person name="Cotton M."/>
            <person name="Joshu C."/>
            <person name="Antonoiu B."/>
            <person name="Zidanic M."/>
            <person name="Strong C."/>
            <person name="Sun H."/>
            <person name="Lamar B."/>
            <person name="Yordan C."/>
            <person name="Ma P."/>
            <person name="Zhong J."/>
            <person name="Preston R."/>
            <person name="Vil D."/>
            <person name="Shekher M."/>
            <person name="Matero A."/>
            <person name="Shah R."/>
            <person name="Swaby I.K."/>
            <person name="O'Shaughnessy A."/>
            <person name="Rodriguez M."/>
            <person name="Hoffman J."/>
            <person name="Till S."/>
            <person name="Granat S."/>
            <person name="Shohdy N."/>
            <person name="Hasegawa A."/>
            <person name="Hameed A."/>
            <person name="Lodhi M."/>
            <person name="Johnson A."/>
            <person name="Chen E."/>
            <person name="Marra M.A."/>
            <person name="Martienssen R."/>
            <person name="McCombie W.R."/>
        </authorList>
    </citation>
    <scope>NUCLEOTIDE SEQUENCE [LARGE SCALE GENOMIC DNA]</scope>
    <source>
        <strain>cv. Columbia</strain>
    </source>
</reference>
<reference key="2">
    <citation type="journal article" date="2017" name="Plant J.">
        <title>Araport11: a complete reannotation of the Arabidopsis thaliana reference genome.</title>
        <authorList>
            <person name="Cheng C.Y."/>
            <person name="Krishnakumar V."/>
            <person name="Chan A.P."/>
            <person name="Thibaud-Nissen F."/>
            <person name="Schobel S."/>
            <person name="Town C.D."/>
        </authorList>
    </citation>
    <scope>GENOME REANNOTATION</scope>
    <source>
        <strain>cv. Columbia</strain>
    </source>
</reference>
<reference key="3">
    <citation type="journal article" date="2002" name="Protein Expr. Purif.">
        <title>Overproduction, purification, and characterization of recombinant bifunctional threonine-sensitive aspartate kinase-homoserine dehydrogenase from Arabidopsis thaliana.</title>
        <authorList>
            <person name="Paris S."/>
            <person name="Wessel P.M."/>
            <person name="Dumas R."/>
        </authorList>
    </citation>
    <scope>NUCLEOTIDE SEQUENCE [MRNA] (ISOFORM 1)</scope>
    <scope>FUNCTION</scope>
    <scope>CATALYTIC ACTIVITY</scope>
    <scope>ACTIVITY REGULATION</scope>
    <scope>BIOPHYSICOCHEMICAL PROPERTIES</scope>
    <scope>PATHWAY</scope>
</reference>
<reference key="4">
    <citation type="journal article" date="2004" name="Genome Res.">
        <title>Whole genome sequence comparisons and 'full-length' cDNA sequences: a combined approach to evaluate and improve Arabidopsis genome annotation.</title>
        <authorList>
            <person name="Castelli V."/>
            <person name="Aury J.-M."/>
            <person name="Jaillon O."/>
            <person name="Wincker P."/>
            <person name="Clepet C."/>
            <person name="Menard M."/>
            <person name="Cruaud C."/>
            <person name="Quetier F."/>
            <person name="Scarpelli C."/>
            <person name="Schaechter V."/>
            <person name="Temple G."/>
            <person name="Caboche M."/>
            <person name="Weissenbach J."/>
            <person name="Salanoubat M."/>
        </authorList>
    </citation>
    <scope>NUCLEOTIDE SEQUENCE [LARGE SCALE MRNA] (ISOFORM 1)</scope>
    <source>
        <strain>cv. Columbia</strain>
    </source>
</reference>
<reference key="5">
    <citation type="journal article" date="2003" name="J. Biol. Chem.">
        <title>Mechanism of control of Arabidopsis thaliana aspartate kinase-homoserine dehydrogenase by threonine.</title>
        <authorList>
            <person name="Paris S."/>
            <person name="Viemon C."/>
            <person name="Curien G."/>
            <person name="Dumas R."/>
        </authorList>
    </citation>
    <scope>ACTIVITY REGULATION</scope>
    <scope>MUTAGENESIS OF ILE-441; GLN-443; ILE-522 AND GLN-524</scope>
    <scope>CATALYTIC ACTIVITY</scope>
</reference>
<reference key="6">
    <citation type="journal article" date="2005" name="J. Biol. Chem.">
        <title>Identification of six novel allosteric effectors of Arabidopsis thaliana aspartate kinase-homoserine dehydrogenase isoforms. Physiological context sets the specificity.</title>
        <authorList>
            <person name="Curien G."/>
            <person name="Ravanel S."/>
            <person name="Robert M."/>
            <person name="Dumas R."/>
        </authorList>
    </citation>
    <scope>FUNCTION</scope>
    <scope>CATALYTIC ACTIVITY</scope>
    <scope>ACTIVITY REGULATION</scope>
    <scope>BIOPHYSICOCHEMICAL PROPERTIES</scope>
    <scope>PATHWAY</scope>
</reference>
<gene>
    <name type="primary">AKHSDH2</name>
    <name type="synonym">AK-HSDH II</name>
    <name type="ordered locus">At4g19710</name>
    <name type="ORF">T16H5.70</name>
</gene>
<organism>
    <name type="scientific">Arabidopsis thaliana</name>
    <name type="common">Mouse-ear cress</name>
    <dbReference type="NCBI Taxonomy" id="3702"/>
    <lineage>
        <taxon>Eukaryota</taxon>
        <taxon>Viridiplantae</taxon>
        <taxon>Streptophyta</taxon>
        <taxon>Embryophyta</taxon>
        <taxon>Tracheophyta</taxon>
        <taxon>Spermatophyta</taxon>
        <taxon>Magnoliopsida</taxon>
        <taxon>eudicotyledons</taxon>
        <taxon>Gunneridae</taxon>
        <taxon>Pentapetalae</taxon>
        <taxon>rosids</taxon>
        <taxon>malvids</taxon>
        <taxon>Brassicales</taxon>
        <taxon>Brassicaceae</taxon>
        <taxon>Camelineae</taxon>
        <taxon>Arabidopsis</taxon>
    </lineage>
</organism>
<protein>
    <recommendedName>
        <fullName>Bifunctional aspartokinase/homoserine dehydrogenase 2, chloroplastic</fullName>
        <shortName>AK-HD 2</shortName>
        <shortName>AK-HSDH 2</shortName>
    </recommendedName>
    <alternativeName>
        <fullName>Beta-aspartyl phosphate homoserine 2</fullName>
    </alternativeName>
    <domain>
        <recommendedName>
            <fullName>Aspartokinase</fullName>
            <ecNumber evidence="10">2.7.2.4</ecNumber>
        </recommendedName>
        <alternativeName>
            <fullName evidence="11">Aspartate kinase</fullName>
        </alternativeName>
    </domain>
    <domain>
        <recommendedName>
            <fullName evidence="11">Homoserine dehydrogenase</fullName>
            <ecNumber evidence="10">1.1.1.3</ecNumber>
        </recommendedName>
    </domain>
</protein>
<feature type="transit peptide" description="Chloroplast" evidence="6">
    <location>
        <begin position="1"/>
        <end position="87"/>
    </location>
</feature>
<feature type="chain" id="PRO_0000245845" description="Bifunctional aspartokinase/homoserine dehydrogenase 2, chloroplastic">
    <location>
        <begin position="88"/>
        <end position="916"/>
    </location>
</feature>
<feature type="domain" description="ACT 1" evidence="7">
    <location>
        <begin position="412"/>
        <end position="487"/>
    </location>
</feature>
<feature type="domain" description="ACT 2" evidence="7">
    <location>
        <begin position="493"/>
        <end position="570"/>
    </location>
</feature>
<feature type="region of interest" description="Aspartokinase" evidence="1">
    <location>
        <begin position="88"/>
        <end position="336"/>
    </location>
</feature>
<feature type="region of interest" description="Interface" evidence="1">
    <location>
        <begin position="337"/>
        <end position="562"/>
    </location>
</feature>
<feature type="region of interest" description="Homoserine dehydrogenase" evidence="1">
    <location>
        <begin position="563"/>
        <end position="916"/>
    </location>
</feature>
<feature type="active site" description="Proton donor" evidence="6">
    <location>
        <position position="776"/>
    </location>
</feature>
<feature type="binding site" evidence="4">
    <location>
        <position position="568"/>
    </location>
    <ligand>
        <name>NAD(+)</name>
        <dbReference type="ChEBI" id="CHEBI:57540"/>
    </ligand>
</feature>
<feature type="binding site" evidence="2">
    <location>
        <position position="568"/>
    </location>
    <ligand>
        <name>NADP(+)</name>
        <dbReference type="ChEBI" id="CHEBI:58349"/>
    </ligand>
</feature>
<feature type="binding site" evidence="3">
    <location>
        <position position="568"/>
    </location>
    <ligand>
        <name>NADPH</name>
        <dbReference type="ChEBI" id="CHEBI:57783"/>
    </ligand>
</feature>
<feature type="binding site" evidence="2">
    <location>
        <position position="600"/>
    </location>
    <ligand>
        <name>NADP(+)</name>
        <dbReference type="ChEBI" id="CHEBI:58349"/>
    </ligand>
</feature>
<feature type="binding site" evidence="4">
    <location>
        <position position="649"/>
    </location>
    <ligand>
        <name>NAD(+)</name>
        <dbReference type="ChEBI" id="CHEBI:57540"/>
    </ligand>
</feature>
<feature type="binding site" evidence="2">
    <location>
        <position position="649"/>
    </location>
    <ligand>
        <name>NADP(+)</name>
        <dbReference type="ChEBI" id="CHEBI:58349"/>
    </ligand>
</feature>
<feature type="binding site" evidence="3">
    <location>
        <position position="649"/>
    </location>
    <ligand>
        <name>NADPH</name>
        <dbReference type="ChEBI" id="CHEBI:57783"/>
    </ligand>
</feature>
<feature type="binding site" evidence="2">
    <location>
        <position position="673"/>
    </location>
    <ligand>
        <name>NADP(+)</name>
        <dbReference type="ChEBI" id="CHEBI:58349"/>
    </ligand>
</feature>
<feature type="binding site" evidence="3">
    <location>
        <position position="673"/>
    </location>
    <ligand>
        <name>NADPH</name>
        <dbReference type="ChEBI" id="CHEBI:57783"/>
    </ligand>
</feature>
<feature type="binding site" evidence="4">
    <location>
        <position position="700"/>
    </location>
    <ligand>
        <name>Na(+)</name>
        <dbReference type="ChEBI" id="CHEBI:29101"/>
    </ligand>
</feature>
<feature type="binding site" evidence="4">
    <location>
        <position position="703"/>
    </location>
    <ligand>
        <name>Na(+)</name>
        <dbReference type="ChEBI" id="CHEBI:29101"/>
    </ligand>
</feature>
<feature type="binding site" evidence="4">
    <location>
        <position position="705"/>
    </location>
    <ligand>
        <name>Na(+)</name>
        <dbReference type="ChEBI" id="CHEBI:29101"/>
    </ligand>
</feature>
<feature type="binding site" evidence="4">
    <location>
        <position position="707"/>
    </location>
    <ligand>
        <name>Na(+)</name>
        <dbReference type="ChEBI" id="CHEBI:29101"/>
    </ligand>
</feature>
<feature type="binding site" evidence="2">
    <location>
        <position position="758"/>
    </location>
    <ligand>
        <name>NADP(+)</name>
        <dbReference type="ChEBI" id="CHEBI:58349"/>
    </ligand>
</feature>
<feature type="binding site" evidence="4">
    <location>
        <position position="761"/>
    </location>
    <ligand>
        <name>L-homoserine</name>
        <dbReference type="ChEBI" id="CHEBI:57476"/>
    </ligand>
</feature>
<feature type="binding site" evidence="2">
    <location>
        <position position="761"/>
    </location>
    <ligand>
        <name>NADP(+)</name>
        <dbReference type="ChEBI" id="CHEBI:58349"/>
    </ligand>
</feature>
<feature type="binding site" evidence="4">
    <location>
        <position position="772"/>
    </location>
    <ligand>
        <name>L-homoserine</name>
        <dbReference type="ChEBI" id="CHEBI:57476"/>
    </ligand>
</feature>
<feature type="binding site" evidence="4">
    <location>
        <position position="893"/>
    </location>
    <ligand>
        <name>NAD(+)</name>
        <dbReference type="ChEBI" id="CHEBI:57540"/>
    </ligand>
</feature>
<feature type="binding site" evidence="2">
    <location>
        <position position="893"/>
    </location>
    <ligand>
        <name>NADP(+)</name>
        <dbReference type="ChEBI" id="CHEBI:58349"/>
    </ligand>
</feature>
<feature type="binding site" evidence="3">
    <location>
        <position position="893"/>
    </location>
    <ligand>
        <name>NADPH</name>
        <dbReference type="ChEBI" id="CHEBI:57783"/>
    </ligand>
</feature>
<feature type="splice variant" id="VSP_019798" description="In isoform 2." evidence="12">
    <original>LRYVGVVDAVNQKGTVELRRYKKEHPFAQLAGSDNIIAFTTTRYKDHPLIVRGPGAGAQVTAGGIFSDILRLASYLGAPS</original>
    <variation>RLFTTNVFPFDQCDHILTIYICM</variation>
    <location>
        <begin position="837"/>
        <end position="916"/>
    </location>
</feature>
<feature type="mutagenesis site" description="Loss of threonine sensitivity for the aspartokinase activity and decreased inhibition of homoserine dehydrogenase activity by threonine." evidence="9">
    <original>I</original>
    <variation>A</variation>
    <location>
        <position position="441"/>
    </location>
</feature>
<feature type="mutagenesis site" description="Loss of threonine sensitivity for the aspartokinase activity and decreased inhibition of homoserine dehydrogenase activity by threonine." evidence="9">
    <original>Q</original>
    <variation>A</variation>
    <location>
        <position position="443"/>
    </location>
</feature>
<feature type="mutagenesis site" description="No effect on the inhibition of aspartokinase activity by threonine, but decreased inhibition of homoserine dehydrogenase activity by threonine." evidence="9">
    <original>I</original>
    <variation>A</variation>
    <location>
        <position position="522"/>
    </location>
</feature>
<feature type="mutagenesis site" description="No effect on the inhibition of aspartokinase activity by threonine, but decreased inhibition of homoserine dehydrogenase activity by threonine." evidence="9">
    <original>Q</original>
    <variation>A</variation>
    <location>
        <position position="524"/>
    </location>
</feature>
<evidence type="ECO:0000250" key="1"/>
<evidence type="ECO:0000250" key="2">
    <source>
        <dbReference type="UniProtKB" id="F9VNG5"/>
    </source>
</evidence>
<evidence type="ECO:0000250" key="3">
    <source>
        <dbReference type="UniProtKB" id="O58802"/>
    </source>
</evidence>
<evidence type="ECO:0000250" key="4">
    <source>
        <dbReference type="UniProtKB" id="P31116"/>
    </source>
</evidence>
<evidence type="ECO:0000250" key="5">
    <source>
        <dbReference type="UniProtKB" id="Q9SA18"/>
    </source>
</evidence>
<evidence type="ECO:0000255" key="6"/>
<evidence type="ECO:0000255" key="7">
    <source>
        <dbReference type="PROSITE-ProRule" id="PRU01007"/>
    </source>
</evidence>
<evidence type="ECO:0000269" key="8">
    <source>
    </source>
</evidence>
<evidence type="ECO:0000269" key="9">
    <source>
    </source>
</evidence>
<evidence type="ECO:0000269" key="10">
    <source>
    </source>
</evidence>
<evidence type="ECO:0000303" key="11">
    <source>
    </source>
</evidence>
<evidence type="ECO:0000305" key="12"/>
<evidence type="ECO:0000305" key="13">
    <source>
    </source>
</evidence>
<evidence type="ECO:0000305" key="14">
    <source>
    </source>
</evidence>
<accession>O81852</accession>
<accession>Q3E9Y8</accession>
<name>AKH2_ARATH</name>
<comment type="function">
    <text evidence="8 10">Bifunctional aspartate kinase and homoserine dehydrogenase that catalyzes the first and the third steps toward the synthesis of lysine, methionine and threonine from aspartate.</text>
</comment>
<comment type="catalytic activity">
    <reaction evidence="8 9 10">
        <text>L-homoserine + NADP(+) = L-aspartate 4-semialdehyde + NADPH + H(+)</text>
        <dbReference type="Rhea" id="RHEA:15761"/>
        <dbReference type="ChEBI" id="CHEBI:15378"/>
        <dbReference type="ChEBI" id="CHEBI:57476"/>
        <dbReference type="ChEBI" id="CHEBI:57783"/>
        <dbReference type="ChEBI" id="CHEBI:58349"/>
        <dbReference type="ChEBI" id="CHEBI:537519"/>
        <dbReference type="EC" id="1.1.1.3"/>
    </reaction>
    <physiologicalReaction direction="right-to-left" evidence="8 9 10">
        <dbReference type="Rhea" id="RHEA:15763"/>
    </physiologicalReaction>
</comment>
<comment type="catalytic activity">
    <reaction evidence="5">
        <text>L-homoserine + NAD(+) = L-aspartate 4-semialdehyde + NADH + H(+)</text>
        <dbReference type="Rhea" id="RHEA:15757"/>
        <dbReference type="ChEBI" id="CHEBI:15378"/>
        <dbReference type="ChEBI" id="CHEBI:57476"/>
        <dbReference type="ChEBI" id="CHEBI:57540"/>
        <dbReference type="ChEBI" id="CHEBI:57945"/>
        <dbReference type="ChEBI" id="CHEBI:537519"/>
        <dbReference type="EC" id="1.1.1.3"/>
    </reaction>
</comment>
<comment type="catalytic activity">
    <reaction evidence="8 10">
        <text>L-aspartate + ATP = 4-phospho-L-aspartate + ADP</text>
        <dbReference type="Rhea" id="RHEA:23776"/>
        <dbReference type="ChEBI" id="CHEBI:29991"/>
        <dbReference type="ChEBI" id="CHEBI:30616"/>
        <dbReference type="ChEBI" id="CHEBI:57535"/>
        <dbReference type="ChEBI" id="CHEBI:456216"/>
        <dbReference type="EC" id="2.7.2.4"/>
    </reaction>
    <physiologicalReaction direction="left-to-right" evidence="8 9 10">
        <dbReference type="Rhea" id="RHEA:23777"/>
    </physiologicalReaction>
</comment>
<comment type="cofactor">
    <cofactor evidence="4">
        <name>a metal cation</name>
        <dbReference type="ChEBI" id="CHEBI:25213"/>
    </cofactor>
    <text evidence="4">A sodium ion is seen in the structure; a metal ion may subtly affect the relative position of the nucleotide-binding region to influence enzyme activity, and could increase the stability of the enzyme.</text>
</comment>
<comment type="activity regulation">
    <text evidence="8 9 10">Threonine interaction with Gln-443 leads to inhibition of aspartate kinase activity and facilitates the binding of a second threonine on Gln-524, leading to a partial inhibition of homoserine dehydrogenase activity (25% of activity remaining at saturation with threonine). Homoserine dehydrogenase activity is also partially inhibited by cysteine (15% of activity remaining at saturation with cysteine). No synergy between threonine and cysteine for the inhibition. 13-fold activation of aspartate kinase activity by cysteine, isoleucine, valine, serine and alanine at 2.5 mM and 4-fold activation by leucine at 2.5 mM, but no activation of homoserine dehydrogenase activity.</text>
</comment>
<comment type="biophysicochemical properties">
    <kinetics>
        <KM evidence="8 10">11.6 mM for aspartate for the aspartokinase activity (in the presence of 40 mM ATP)</KM>
        <KM evidence="8 10">6.15 mM for aspartate for the aspartokinase activity (at pH 8.0, in the presence of 200 uM NADPH and 20 mM ATP)</KM>
        <KM evidence="8 10">1.5 mM for aspartate for the aspartokinase activity (at pH 8.0, in the presence of 200 uM NADPH, 20 mM ATP and a saturating concentration of alanine)</KM>
        <KM evidence="8 10">26.4 mM for aspartate for the aspartokinase activity (in the presence of 100 mM ATP and 0.5 mM threonine)</KM>
        <KM evidence="8 10">5.5 mM for ATP for the aspartokinase activity (in the presence of 50 mM aspartate)</KM>
        <KM evidence="8 10">2.2 mM for ATP for the aspartokinase activity (at pH 8.0, in the presence of 200 uM NADPH and 50 mM aspartate)</KM>
        <KM evidence="8 10">0.42 mM for ATP for the aspartokinase activity (at pH 8.0, in the presence of 200 uM NADPH, 50 mM aspartate and a saturating concentration of alanine)</KM>
        <KM evidence="8 10">5.2 mM for homoserine for the reverse reaction of the homoserine dehydrogenase activity (in the presence of 1 mM NADP)</KM>
        <KM evidence="8 10">1.4 mM for aspartate semialdehyde for the forward reaction of the homoserine dehydrogenase activity (in the presence of NADPH)</KM>
        <KM evidence="8 10">311 uM for aspartate semialdehyde for the forward reaction of the homoserine dehydrogenase activity (at pH 8.0, in the presence of 150 mM KCl and 200 uM NADPH)</KM>
        <KM evidence="8 10">24.5 mM for homoserine for the reverse reaction of the homoserine dehydrogenase activity (in the presence of 1 mM NADP and 60 mM threonine)</KM>
        <KM evidence="8 10">166.1 uM for NADP for the reverse reaction of the homoserine dehydrogenase activity (in the presence of 50 mM homoserine)</KM>
        <KM evidence="8 10">676.1 uM for NADP for the reverse reaction of the homoserine dehydrogenase activity (in the presence of 100 mM homoserine and 60 mM threonine)</KM>
        <Vmax evidence="8 10">5.4 umol/min/mg enzyme toward aspartylhydroxamate for the aspartokinase activity</Vmax>
        <Vmax evidence="8 10">165.0 umol/min/mg enzyme toward aspartate semialdehyde for the forward reaction of the homoserine dehydrogenase activity</Vmax>
        <Vmax evidence="8 10">18.8 umol/min/mg enzyme toward NADPH for the reverse reaction of the homoserine dehydrogenase activity</Vmax>
    </kinetics>
</comment>
<comment type="pathway">
    <text evidence="13 14">Amino-acid biosynthesis; L-lysine biosynthesis via DAP pathway; (S)-tetrahydrodipicolinate from L-aspartate: step 1/4.</text>
</comment>
<comment type="pathway">
    <text evidence="13 14">Amino-acid biosynthesis; L-methionine biosynthesis via de novo pathway; L-homoserine from L-aspartate: step 1/3.</text>
</comment>
<comment type="pathway">
    <text evidence="13 14">Amino-acid biosynthesis; L-methionine biosynthesis via de novo pathway; L-homoserine from L-aspartate: step 3/3.</text>
</comment>
<comment type="pathway">
    <text evidence="13 14">Amino-acid biosynthesis; L-threonine biosynthesis; L-threonine from L-aspartate: step 1/5.</text>
</comment>
<comment type="pathway">
    <text evidence="13 14">Amino-acid biosynthesis; L-threonine biosynthesis; L-threonine from L-aspartate: step 3/5.</text>
</comment>
<comment type="subunit">
    <text evidence="12">Homo- or heterodimer.</text>
</comment>
<comment type="subcellular location">
    <subcellularLocation>
        <location>Plastid</location>
        <location>Chloroplast</location>
    </subcellularLocation>
</comment>
<comment type="alternative products">
    <event type="alternative splicing"/>
    <isoform>
        <id>O81852-1</id>
        <name>1</name>
        <sequence type="displayed"/>
    </isoform>
    <isoform>
        <id>O81852-2</id>
        <name>2</name>
        <sequence type="described" ref="VSP_019798"/>
    </isoform>
</comment>
<comment type="similarity">
    <text evidence="12">In the N-terminal section; belongs to the aspartokinase family.</text>
</comment>
<comment type="similarity">
    <text evidence="12">In the C-terminal section; belongs to the homoserine dehydrogenase family.</text>
</comment>
<sequence length="916" mass="100250">MATLKPSFTVSPPNSNPIRFGSFPPQCFLRVPKPRRLILPRFRKTTGGGGGLIRCELPDFHLSATATTVSGVSTVNLVDQVQIPKGEMWSVHKFGGTCVGNSQRIRNVAEVIINDNSERKLVVVSAMSKVTDMMYDLIRKAQSRDDSYLSALEAVLEKHRLTARDLLDGDDLASFLSHLHNDISNLKAMLRAIYIAGHASESFSDFVAGHGELWSAQMLSYVVRKTGLECKWMDTRDVLIVNPTSSNQVDPDFGESEKRLDKWFSLNPSKIIIATGFIASTPQNIPTTLKRDGSDFSAAIMGALLRARQVTIWTDVDGVYSADPRKVNEAVILQTLSYQEAWEMSYFGANVLHPRTIIPVMRYNIPIVIRNIFNLSAPGTIICQPPEDDYDLKLTTPVKGFATIDNLALINVEGTGMAGVPGTASDIFGCVKDVGANVIMISQASSEHSVCFAVPEKEVNAVSEALRSRFSEALQAGRLSQIEVIPNCSILAAVGQKMASTPGVSCTLFSALAKANINVRAISQGCSEYNVTVVIKREDSVKALRAVHSRFFLSRTTLAMGIVGPGLIGATLLDQLRDQAAVLKQEFNIDLRVLGITGSKKMLLSDIGIDLSRWRELLNEKGTEADLDKFTQQVHGNHFIPNSVVVDCTADSAIASRYYDWLRKGIHVITPNKKANSGPLDQYLKLRDLQRKSYTHYFYEATVGAGLPIISTLRGLLETGDKILRIEGICSGTLSYLFNNFVGDRSFSEVVTEAKNAGFTEPDPRDDLSGTDVARKVIILARESGLKLDLADLPIRSLVPEPLKGCTSVEEFMEKLPQYDGDLAKERLDAENSGEVLRYVGVVDAVNQKGTVELRRYKKEHPFAQLAGSDNIIAFTTTRYKDHPLIVRGPGAGAQVTAGGIFSDILRLASYLGAPS</sequence>
<proteinExistence type="evidence at protein level"/>
<dbReference type="EC" id="2.7.2.4" evidence="10"/>
<dbReference type="EC" id="1.1.1.3" evidence="10"/>
<dbReference type="EMBL" id="AL024486">
    <property type="protein sequence ID" value="CAA19688.1"/>
    <property type="molecule type" value="Genomic_DNA"/>
</dbReference>
<dbReference type="EMBL" id="AL161551">
    <property type="protein sequence ID" value="CAB78973.1"/>
    <property type="molecule type" value="Genomic_DNA"/>
</dbReference>
<dbReference type="EMBL" id="CP002687">
    <property type="protein sequence ID" value="AEE84219.1"/>
    <property type="molecule type" value="Genomic_DNA"/>
</dbReference>
<dbReference type="EMBL" id="CP002687">
    <property type="protein sequence ID" value="AEE84220.1"/>
    <property type="molecule type" value="Genomic_DNA"/>
</dbReference>
<dbReference type="EMBL" id="BX827863">
    <property type="status" value="NOT_ANNOTATED_CDS"/>
    <property type="molecule type" value="mRNA"/>
</dbReference>
<dbReference type="PIR" id="T04752">
    <property type="entry name" value="T04752"/>
</dbReference>
<dbReference type="RefSeq" id="NP_193706.2">
    <molecule id="O81852-2"/>
    <property type="nucleotide sequence ID" value="NM_118091.3"/>
</dbReference>
<dbReference type="RefSeq" id="NP_974576.1">
    <molecule id="O81852-1"/>
    <property type="nucleotide sequence ID" value="NM_202847.3"/>
</dbReference>
<dbReference type="SMR" id="O81852"/>
<dbReference type="BioGRID" id="13008">
    <property type="interactions" value="1"/>
</dbReference>
<dbReference type="FunCoup" id="O81852">
    <property type="interactions" value="587"/>
</dbReference>
<dbReference type="STRING" id="3702.O81852"/>
<dbReference type="iPTMnet" id="O81852"/>
<dbReference type="PaxDb" id="3702-AT4G19710.2"/>
<dbReference type="ProteomicsDB" id="245073">
    <molecule id="O81852-1"/>
</dbReference>
<dbReference type="EnsemblPlants" id="AT4G19710.1">
    <molecule id="O81852-2"/>
    <property type="protein sequence ID" value="AT4G19710.1"/>
    <property type="gene ID" value="AT4G19710"/>
</dbReference>
<dbReference type="EnsemblPlants" id="AT4G19710.2">
    <molecule id="O81852-1"/>
    <property type="protein sequence ID" value="AT4G19710.2"/>
    <property type="gene ID" value="AT4G19710"/>
</dbReference>
<dbReference type="GeneID" id="827715"/>
<dbReference type="Gramene" id="AT4G19710.1">
    <molecule id="O81852-2"/>
    <property type="protein sequence ID" value="AT4G19710.1"/>
    <property type="gene ID" value="AT4G19710"/>
</dbReference>
<dbReference type="Gramene" id="AT4G19710.2">
    <molecule id="O81852-1"/>
    <property type="protein sequence ID" value="AT4G19710.2"/>
    <property type="gene ID" value="AT4G19710"/>
</dbReference>
<dbReference type="KEGG" id="ath:AT4G19710"/>
<dbReference type="Araport" id="AT4G19710"/>
<dbReference type="TAIR" id="AT4G19710">
    <property type="gene designation" value="AK-HSDH II"/>
</dbReference>
<dbReference type="eggNOG" id="ENOG502QQBK">
    <property type="taxonomic scope" value="Eukaryota"/>
</dbReference>
<dbReference type="HOGENOM" id="CLU_009116_7_1_1"/>
<dbReference type="InParanoid" id="O81852"/>
<dbReference type="OMA" id="VTCNKIA"/>
<dbReference type="PhylomeDB" id="O81852"/>
<dbReference type="SABIO-RK" id="O81852"/>
<dbReference type="UniPathway" id="UPA00034">
    <property type="reaction ID" value="UER00015"/>
</dbReference>
<dbReference type="UniPathway" id="UPA00050">
    <property type="reaction ID" value="UER00063"/>
</dbReference>
<dbReference type="UniPathway" id="UPA00050">
    <property type="reaction ID" value="UER00461"/>
</dbReference>
<dbReference type="UniPathway" id="UPA00051">
    <property type="reaction ID" value="UER00462"/>
</dbReference>
<dbReference type="UniPathway" id="UPA00051">
    <property type="reaction ID" value="UER00465"/>
</dbReference>
<dbReference type="PRO" id="PR:O81852"/>
<dbReference type="Proteomes" id="UP000006548">
    <property type="component" value="Chromosome 4"/>
</dbReference>
<dbReference type="ExpressionAtlas" id="O81852">
    <property type="expression patterns" value="baseline and differential"/>
</dbReference>
<dbReference type="GO" id="GO:0009507">
    <property type="term" value="C:chloroplast"/>
    <property type="evidence" value="ECO:0007005"/>
    <property type="project" value="TAIR"/>
</dbReference>
<dbReference type="GO" id="GO:0009570">
    <property type="term" value="C:chloroplast stroma"/>
    <property type="evidence" value="ECO:0007005"/>
    <property type="project" value="TAIR"/>
</dbReference>
<dbReference type="GO" id="GO:0004072">
    <property type="term" value="F:aspartate kinase activity"/>
    <property type="evidence" value="ECO:0000314"/>
    <property type="project" value="TAIR"/>
</dbReference>
<dbReference type="GO" id="GO:0005524">
    <property type="term" value="F:ATP binding"/>
    <property type="evidence" value="ECO:0007669"/>
    <property type="project" value="UniProtKB-KW"/>
</dbReference>
<dbReference type="GO" id="GO:0004412">
    <property type="term" value="F:homoserine dehydrogenase activity"/>
    <property type="evidence" value="ECO:0000314"/>
    <property type="project" value="TAIR"/>
</dbReference>
<dbReference type="GO" id="GO:0046872">
    <property type="term" value="F:metal ion binding"/>
    <property type="evidence" value="ECO:0007669"/>
    <property type="project" value="UniProtKB-KW"/>
</dbReference>
<dbReference type="GO" id="GO:0070403">
    <property type="term" value="F:NAD+ binding"/>
    <property type="evidence" value="ECO:0000250"/>
    <property type="project" value="UniProtKB"/>
</dbReference>
<dbReference type="GO" id="GO:0050661">
    <property type="term" value="F:NADP binding"/>
    <property type="evidence" value="ECO:0007669"/>
    <property type="project" value="InterPro"/>
</dbReference>
<dbReference type="GO" id="GO:0009089">
    <property type="term" value="P:lysine biosynthetic process via diaminopimelate"/>
    <property type="evidence" value="ECO:0000250"/>
    <property type="project" value="UniProtKB"/>
</dbReference>
<dbReference type="GO" id="GO:0009086">
    <property type="term" value="P:methionine biosynthetic process"/>
    <property type="evidence" value="ECO:0000250"/>
    <property type="project" value="UniProtKB"/>
</dbReference>
<dbReference type="GO" id="GO:0009088">
    <property type="term" value="P:threonine biosynthetic process"/>
    <property type="evidence" value="ECO:0000250"/>
    <property type="project" value="UniProtKB"/>
</dbReference>
<dbReference type="CDD" id="cd04257">
    <property type="entry name" value="AAK_AK-HSDH"/>
    <property type="match status" value="1"/>
</dbReference>
<dbReference type="CDD" id="cd04921">
    <property type="entry name" value="ACT_AKi-HSDH-ThrA-like_1"/>
    <property type="match status" value="1"/>
</dbReference>
<dbReference type="CDD" id="cd04922">
    <property type="entry name" value="ACT_AKi-HSDH-ThrA_2"/>
    <property type="match status" value="1"/>
</dbReference>
<dbReference type="FunFam" id="3.30.2130.10:FF:000001">
    <property type="entry name" value="Bifunctional aspartokinase/homoserine dehydrogenase"/>
    <property type="match status" value="1"/>
</dbReference>
<dbReference type="FunFam" id="3.30.360.10:FF:000006">
    <property type="entry name" value="Bifunctional aspartokinase/homoserine dehydrogenase"/>
    <property type="match status" value="1"/>
</dbReference>
<dbReference type="FunFam" id="3.40.1160.10:FF:000017">
    <property type="entry name" value="Bifunctional aspartokinase/homoserine dehydrogenase"/>
    <property type="match status" value="1"/>
</dbReference>
<dbReference type="FunFam" id="3.40.50.720:FF:000083">
    <property type="entry name" value="Bifunctional aspartokinase/homoserine dehydrogenase"/>
    <property type="match status" value="1"/>
</dbReference>
<dbReference type="Gene3D" id="3.40.1160.10">
    <property type="entry name" value="Acetylglutamate kinase-like"/>
    <property type="match status" value="1"/>
</dbReference>
<dbReference type="Gene3D" id="3.30.360.10">
    <property type="entry name" value="Dihydrodipicolinate Reductase, domain 2"/>
    <property type="match status" value="1"/>
</dbReference>
<dbReference type="Gene3D" id="3.40.50.720">
    <property type="entry name" value="NAD(P)-binding Rossmann-like Domain"/>
    <property type="match status" value="1"/>
</dbReference>
<dbReference type="Gene3D" id="3.30.2130.10">
    <property type="entry name" value="VC0802-like"/>
    <property type="match status" value="1"/>
</dbReference>
<dbReference type="InterPro" id="IPR036393">
    <property type="entry name" value="AceGlu_kinase-like_sf"/>
</dbReference>
<dbReference type="InterPro" id="IPR045865">
    <property type="entry name" value="ACT-like_dom_sf"/>
</dbReference>
<dbReference type="InterPro" id="IPR054352">
    <property type="entry name" value="ACT_Aspartokinase"/>
</dbReference>
<dbReference type="InterPro" id="IPR002912">
    <property type="entry name" value="ACT_dom"/>
</dbReference>
<dbReference type="InterPro" id="IPR041743">
    <property type="entry name" value="AK-HSDH_N"/>
</dbReference>
<dbReference type="InterPro" id="IPR001048">
    <property type="entry name" value="Asp/Glu/Uridylate_kinase"/>
</dbReference>
<dbReference type="InterPro" id="IPR005106">
    <property type="entry name" value="Asp/hSer_DH_NAD-bd"/>
</dbReference>
<dbReference type="InterPro" id="IPR001341">
    <property type="entry name" value="Asp_kinase"/>
</dbReference>
<dbReference type="InterPro" id="IPR018042">
    <property type="entry name" value="Aspartate_kinase_CS"/>
</dbReference>
<dbReference type="InterPro" id="IPR011147">
    <property type="entry name" value="Bifunc_Aspkin/hSer_DH"/>
</dbReference>
<dbReference type="InterPro" id="IPR001342">
    <property type="entry name" value="HDH_cat"/>
</dbReference>
<dbReference type="InterPro" id="IPR019811">
    <property type="entry name" value="HDH_CS"/>
</dbReference>
<dbReference type="InterPro" id="IPR036291">
    <property type="entry name" value="NAD(P)-bd_dom_sf"/>
</dbReference>
<dbReference type="NCBIfam" id="TIGR00657">
    <property type="entry name" value="asp_kinases"/>
    <property type="match status" value="1"/>
</dbReference>
<dbReference type="NCBIfam" id="NF006959">
    <property type="entry name" value="PRK09436.1"/>
    <property type="match status" value="1"/>
</dbReference>
<dbReference type="NCBIfam" id="NF007003">
    <property type="entry name" value="PRK09466.1"/>
    <property type="match status" value="1"/>
</dbReference>
<dbReference type="PANTHER" id="PTHR43070">
    <property type="match status" value="1"/>
</dbReference>
<dbReference type="PANTHER" id="PTHR43070:SF5">
    <property type="entry name" value="HOMOSERINE DEHYDROGENASE"/>
    <property type="match status" value="1"/>
</dbReference>
<dbReference type="Pfam" id="PF00696">
    <property type="entry name" value="AA_kinase"/>
    <property type="match status" value="1"/>
</dbReference>
<dbReference type="Pfam" id="PF22468">
    <property type="entry name" value="ACT_9"/>
    <property type="match status" value="2"/>
</dbReference>
<dbReference type="Pfam" id="PF00742">
    <property type="entry name" value="Homoserine_dh"/>
    <property type="match status" value="1"/>
</dbReference>
<dbReference type="Pfam" id="PF03447">
    <property type="entry name" value="NAD_binding_3"/>
    <property type="match status" value="1"/>
</dbReference>
<dbReference type="SUPFAM" id="SSF55021">
    <property type="entry name" value="ACT-like"/>
    <property type="match status" value="2"/>
</dbReference>
<dbReference type="SUPFAM" id="SSF53633">
    <property type="entry name" value="Carbamate kinase-like"/>
    <property type="match status" value="1"/>
</dbReference>
<dbReference type="SUPFAM" id="SSF55347">
    <property type="entry name" value="Glyceraldehyde-3-phosphate dehydrogenase-like, C-terminal domain"/>
    <property type="match status" value="1"/>
</dbReference>
<dbReference type="SUPFAM" id="SSF51735">
    <property type="entry name" value="NAD(P)-binding Rossmann-fold domains"/>
    <property type="match status" value="1"/>
</dbReference>
<dbReference type="PROSITE" id="PS51671">
    <property type="entry name" value="ACT"/>
    <property type="match status" value="2"/>
</dbReference>
<dbReference type="PROSITE" id="PS00324">
    <property type="entry name" value="ASPARTOKINASE"/>
    <property type="match status" value="1"/>
</dbReference>
<dbReference type="PROSITE" id="PS01042">
    <property type="entry name" value="HOMOSER_DHGENASE"/>
    <property type="match status" value="1"/>
</dbReference>
<keyword id="KW-0025">Alternative splicing</keyword>
<keyword id="KW-0028">Amino-acid biosynthesis</keyword>
<keyword id="KW-0067">ATP-binding</keyword>
<keyword id="KW-0150">Chloroplast</keyword>
<keyword id="KW-0418">Kinase</keyword>
<keyword id="KW-0457">Lysine biosynthesis</keyword>
<keyword id="KW-0479">Metal-binding</keyword>
<keyword id="KW-0486">Methionine biosynthesis</keyword>
<keyword id="KW-0511">Multifunctional enzyme</keyword>
<keyword id="KW-0520">NAD</keyword>
<keyword id="KW-0521">NADP</keyword>
<keyword id="KW-0547">Nucleotide-binding</keyword>
<keyword id="KW-0560">Oxidoreductase</keyword>
<keyword id="KW-0934">Plastid</keyword>
<keyword id="KW-1185">Reference proteome</keyword>
<keyword id="KW-0677">Repeat</keyword>
<keyword id="KW-0915">Sodium</keyword>
<keyword id="KW-0791">Threonine biosynthesis</keyword>
<keyword id="KW-0808">Transferase</keyword>
<keyword id="KW-0809">Transit peptide</keyword>